<name>SUFE_SALCH</name>
<dbReference type="EMBL" id="AE017220">
    <property type="protein sequence ID" value="AAX65300.1"/>
    <property type="molecule type" value="Genomic_DNA"/>
</dbReference>
<dbReference type="RefSeq" id="WP_000279744.1">
    <property type="nucleotide sequence ID" value="NC_006905.1"/>
</dbReference>
<dbReference type="SMR" id="Q57PR1"/>
<dbReference type="KEGG" id="sec:SCH_1394"/>
<dbReference type="HOGENOM" id="CLU_124502_1_1_6"/>
<dbReference type="UniPathway" id="UPA00266"/>
<dbReference type="Proteomes" id="UP000000538">
    <property type="component" value="Chromosome"/>
</dbReference>
<dbReference type="GO" id="GO:0005737">
    <property type="term" value="C:cytoplasm"/>
    <property type="evidence" value="ECO:0007669"/>
    <property type="project" value="UniProtKB-SubCell"/>
</dbReference>
<dbReference type="GO" id="GO:0016226">
    <property type="term" value="P:iron-sulfur cluster assembly"/>
    <property type="evidence" value="ECO:0007669"/>
    <property type="project" value="InterPro"/>
</dbReference>
<dbReference type="GO" id="GO:0006790">
    <property type="term" value="P:sulfur compound metabolic process"/>
    <property type="evidence" value="ECO:0007669"/>
    <property type="project" value="InterPro"/>
</dbReference>
<dbReference type="Gene3D" id="3.90.1010.10">
    <property type="match status" value="1"/>
</dbReference>
<dbReference type="HAMAP" id="MF_01832">
    <property type="entry name" value="SufE"/>
    <property type="match status" value="1"/>
</dbReference>
<dbReference type="InterPro" id="IPR023939">
    <property type="entry name" value="Cysteine_desulfuration_SufE"/>
</dbReference>
<dbReference type="InterPro" id="IPR003808">
    <property type="entry name" value="Fe-S_metab-assoc_dom"/>
</dbReference>
<dbReference type="NCBIfam" id="NF006792">
    <property type="entry name" value="PRK09296.1"/>
    <property type="match status" value="1"/>
</dbReference>
<dbReference type="PANTHER" id="PTHR43597:SF3">
    <property type="entry name" value="CYSTEINE DESULFURATION PROTEIN SUFE"/>
    <property type="match status" value="1"/>
</dbReference>
<dbReference type="PANTHER" id="PTHR43597">
    <property type="entry name" value="SULFUR ACCEPTOR PROTEIN CSDE"/>
    <property type="match status" value="1"/>
</dbReference>
<dbReference type="Pfam" id="PF02657">
    <property type="entry name" value="SufE"/>
    <property type="match status" value="1"/>
</dbReference>
<dbReference type="SUPFAM" id="SSF82649">
    <property type="entry name" value="SufE/NifU"/>
    <property type="match status" value="1"/>
</dbReference>
<protein>
    <recommendedName>
        <fullName evidence="1">Cysteine desulfuration protein SufE</fullName>
    </recommendedName>
</protein>
<gene>
    <name evidence="1" type="primary">sufE</name>
    <name type="ordered locus">SCH_1394</name>
</gene>
<sequence length="138" mass="15788">MAVLPDKEKLLRNFTRCANWEEKYLYIIELGQRLAELNPQDRNPQNTIHGCQSQVWIVMRRNANGIIELQGDSDAAIVKGLMAVVFILYHQMTAQDIVHFDVRPWFEKMALAQHLTPSRSQGLEAMIRAIRAKAATLS</sequence>
<accession>Q57PR1</accession>
<evidence type="ECO:0000255" key="1">
    <source>
        <dbReference type="HAMAP-Rule" id="MF_01832"/>
    </source>
</evidence>
<comment type="function">
    <text evidence="1">Participates in cysteine desulfuration mediated by SufS. Cysteine desulfuration mobilizes sulfur from L-cysteine to yield L-alanine and constitutes an essential step in sulfur metabolism for biosynthesis of a variety of sulfur-containing biomolecules. Functions as a sulfur acceptor for SufS, by mediating the direct transfer of the sulfur atom from the S-sulfanylcysteine of SufS, an intermediate product of cysteine desulfuration process.</text>
</comment>
<comment type="pathway">
    <text evidence="1">Cofactor biosynthesis; iron-sulfur cluster biosynthesis.</text>
</comment>
<comment type="subunit">
    <text evidence="1">Homodimer. Interacts with SufS.</text>
</comment>
<comment type="subcellular location">
    <subcellularLocation>
        <location evidence="1">Cytoplasm</location>
    </subcellularLocation>
</comment>
<comment type="similarity">
    <text evidence="1">Belongs to the SufE family.</text>
</comment>
<keyword id="KW-0963">Cytoplasm</keyword>
<reference key="1">
    <citation type="journal article" date="2005" name="Nucleic Acids Res.">
        <title>The genome sequence of Salmonella enterica serovar Choleraesuis, a highly invasive and resistant zoonotic pathogen.</title>
        <authorList>
            <person name="Chiu C.-H."/>
            <person name="Tang P."/>
            <person name="Chu C."/>
            <person name="Hu S."/>
            <person name="Bao Q."/>
            <person name="Yu J."/>
            <person name="Chou Y.-Y."/>
            <person name="Wang H.-S."/>
            <person name="Lee Y.-S."/>
        </authorList>
    </citation>
    <scope>NUCLEOTIDE SEQUENCE [LARGE SCALE GENOMIC DNA]</scope>
    <source>
        <strain>SC-B67</strain>
    </source>
</reference>
<feature type="chain" id="PRO_1000070444" description="Cysteine desulfuration protein SufE">
    <location>
        <begin position="1"/>
        <end position="138"/>
    </location>
</feature>
<feature type="active site" description="Cysteine persulfide intermediate" evidence="1">
    <location>
        <position position="51"/>
    </location>
</feature>
<proteinExistence type="inferred from homology"/>
<organism>
    <name type="scientific">Salmonella choleraesuis (strain SC-B67)</name>
    <dbReference type="NCBI Taxonomy" id="321314"/>
    <lineage>
        <taxon>Bacteria</taxon>
        <taxon>Pseudomonadati</taxon>
        <taxon>Pseudomonadota</taxon>
        <taxon>Gammaproteobacteria</taxon>
        <taxon>Enterobacterales</taxon>
        <taxon>Enterobacteriaceae</taxon>
        <taxon>Salmonella</taxon>
    </lineage>
</organism>